<accession>A8ARJ5</accession>
<feature type="chain" id="PRO_1000049496" description="Glycerol-3-phosphate dehydrogenase [NAD(P)+]">
    <location>
        <begin position="1"/>
        <end position="339"/>
    </location>
</feature>
<feature type="active site" description="Proton acceptor" evidence="1">
    <location>
        <position position="195"/>
    </location>
</feature>
<feature type="binding site" evidence="1">
    <location>
        <position position="15"/>
    </location>
    <ligand>
        <name>NADPH</name>
        <dbReference type="ChEBI" id="CHEBI:57783"/>
    </ligand>
</feature>
<feature type="binding site" evidence="1">
    <location>
        <position position="16"/>
    </location>
    <ligand>
        <name>NADPH</name>
        <dbReference type="ChEBI" id="CHEBI:57783"/>
    </ligand>
</feature>
<feature type="binding site" evidence="1">
    <location>
        <position position="36"/>
    </location>
    <ligand>
        <name>NADPH</name>
        <dbReference type="ChEBI" id="CHEBI:57783"/>
    </ligand>
</feature>
<feature type="binding site" evidence="1">
    <location>
        <position position="110"/>
    </location>
    <ligand>
        <name>NADPH</name>
        <dbReference type="ChEBI" id="CHEBI:57783"/>
    </ligand>
</feature>
<feature type="binding site" evidence="1">
    <location>
        <position position="110"/>
    </location>
    <ligand>
        <name>sn-glycerol 3-phosphate</name>
        <dbReference type="ChEBI" id="CHEBI:57597"/>
    </ligand>
</feature>
<feature type="binding site" evidence="1">
    <location>
        <position position="139"/>
    </location>
    <ligand>
        <name>sn-glycerol 3-phosphate</name>
        <dbReference type="ChEBI" id="CHEBI:57597"/>
    </ligand>
</feature>
<feature type="binding site" evidence="1">
    <location>
        <position position="141"/>
    </location>
    <ligand>
        <name>sn-glycerol 3-phosphate</name>
        <dbReference type="ChEBI" id="CHEBI:57597"/>
    </ligand>
</feature>
<feature type="binding site" evidence="1">
    <location>
        <position position="143"/>
    </location>
    <ligand>
        <name>NADPH</name>
        <dbReference type="ChEBI" id="CHEBI:57783"/>
    </ligand>
</feature>
<feature type="binding site" evidence="1">
    <location>
        <position position="195"/>
    </location>
    <ligand>
        <name>sn-glycerol 3-phosphate</name>
        <dbReference type="ChEBI" id="CHEBI:57597"/>
    </ligand>
</feature>
<feature type="binding site" evidence="1">
    <location>
        <position position="248"/>
    </location>
    <ligand>
        <name>sn-glycerol 3-phosphate</name>
        <dbReference type="ChEBI" id="CHEBI:57597"/>
    </ligand>
</feature>
<feature type="binding site" evidence="1">
    <location>
        <position position="258"/>
    </location>
    <ligand>
        <name>sn-glycerol 3-phosphate</name>
        <dbReference type="ChEBI" id="CHEBI:57597"/>
    </ligand>
</feature>
<feature type="binding site" evidence="1">
    <location>
        <position position="259"/>
    </location>
    <ligand>
        <name>NADPH</name>
        <dbReference type="ChEBI" id="CHEBI:57783"/>
    </ligand>
</feature>
<feature type="binding site" evidence="1">
    <location>
        <position position="259"/>
    </location>
    <ligand>
        <name>sn-glycerol 3-phosphate</name>
        <dbReference type="ChEBI" id="CHEBI:57597"/>
    </ligand>
</feature>
<feature type="binding site" evidence="1">
    <location>
        <position position="260"/>
    </location>
    <ligand>
        <name>sn-glycerol 3-phosphate</name>
        <dbReference type="ChEBI" id="CHEBI:57597"/>
    </ligand>
</feature>
<feature type="binding site" evidence="1">
    <location>
        <position position="283"/>
    </location>
    <ligand>
        <name>NADPH</name>
        <dbReference type="ChEBI" id="CHEBI:57783"/>
    </ligand>
</feature>
<feature type="binding site" evidence="1">
    <location>
        <position position="285"/>
    </location>
    <ligand>
        <name>NADPH</name>
        <dbReference type="ChEBI" id="CHEBI:57783"/>
    </ligand>
</feature>
<reference key="1">
    <citation type="submission" date="2007-08" db="EMBL/GenBank/DDBJ databases">
        <authorList>
            <consortium name="The Citrobacter koseri Genome Sequencing Project"/>
            <person name="McClelland M."/>
            <person name="Sanderson E.K."/>
            <person name="Porwollik S."/>
            <person name="Spieth J."/>
            <person name="Clifton W.S."/>
            <person name="Latreille P."/>
            <person name="Courtney L."/>
            <person name="Wang C."/>
            <person name="Pepin K."/>
            <person name="Bhonagiri V."/>
            <person name="Nash W."/>
            <person name="Johnson M."/>
            <person name="Thiruvilangam P."/>
            <person name="Wilson R."/>
        </authorList>
    </citation>
    <scope>NUCLEOTIDE SEQUENCE [LARGE SCALE GENOMIC DNA]</scope>
    <source>
        <strain>ATCC BAA-895 / CDC 4225-83 / SGSC4696</strain>
    </source>
</reference>
<dbReference type="EC" id="1.1.1.94" evidence="1"/>
<dbReference type="EMBL" id="CP000822">
    <property type="protein sequence ID" value="ABV16108.1"/>
    <property type="molecule type" value="Genomic_DNA"/>
</dbReference>
<dbReference type="RefSeq" id="WP_012135746.1">
    <property type="nucleotide sequence ID" value="NC_009792.1"/>
</dbReference>
<dbReference type="SMR" id="A8ARJ5"/>
<dbReference type="STRING" id="290338.CKO_05065"/>
<dbReference type="GeneID" id="45138521"/>
<dbReference type="KEGG" id="cko:CKO_05065"/>
<dbReference type="HOGENOM" id="CLU_033449_0_2_6"/>
<dbReference type="OrthoDB" id="9812273at2"/>
<dbReference type="UniPathway" id="UPA00940"/>
<dbReference type="Proteomes" id="UP000008148">
    <property type="component" value="Chromosome"/>
</dbReference>
<dbReference type="GO" id="GO:0005829">
    <property type="term" value="C:cytosol"/>
    <property type="evidence" value="ECO:0007669"/>
    <property type="project" value="TreeGrafter"/>
</dbReference>
<dbReference type="GO" id="GO:0047952">
    <property type="term" value="F:glycerol-3-phosphate dehydrogenase [NAD(P)+] activity"/>
    <property type="evidence" value="ECO:0007669"/>
    <property type="project" value="UniProtKB-UniRule"/>
</dbReference>
<dbReference type="GO" id="GO:0051287">
    <property type="term" value="F:NAD binding"/>
    <property type="evidence" value="ECO:0007669"/>
    <property type="project" value="InterPro"/>
</dbReference>
<dbReference type="GO" id="GO:0005975">
    <property type="term" value="P:carbohydrate metabolic process"/>
    <property type="evidence" value="ECO:0007669"/>
    <property type="project" value="InterPro"/>
</dbReference>
<dbReference type="GO" id="GO:0046167">
    <property type="term" value="P:glycerol-3-phosphate biosynthetic process"/>
    <property type="evidence" value="ECO:0007669"/>
    <property type="project" value="UniProtKB-UniRule"/>
</dbReference>
<dbReference type="GO" id="GO:0046168">
    <property type="term" value="P:glycerol-3-phosphate catabolic process"/>
    <property type="evidence" value="ECO:0007669"/>
    <property type="project" value="InterPro"/>
</dbReference>
<dbReference type="GO" id="GO:0046474">
    <property type="term" value="P:glycerophospholipid biosynthetic process"/>
    <property type="evidence" value="ECO:0007669"/>
    <property type="project" value="TreeGrafter"/>
</dbReference>
<dbReference type="FunFam" id="1.10.1040.10:FF:000001">
    <property type="entry name" value="Glycerol-3-phosphate dehydrogenase [NAD(P)+]"/>
    <property type="match status" value="1"/>
</dbReference>
<dbReference type="FunFam" id="3.40.50.720:FF:000019">
    <property type="entry name" value="Glycerol-3-phosphate dehydrogenase [NAD(P)+]"/>
    <property type="match status" value="1"/>
</dbReference>
<dbReference type="Gene3D" id="1.10.1040.10">
    <property type="entry name" value="N-(1-d-carboxylethyl)-l-norvaline Dehydrogenase, domain 2"/>
    <property type="match status" value="1"/>
</dbReference>
<dbReference type="Gene3D" id="3.40.50.720">
    <property type="entry name" value="NAD(P)-binding Rossmann-like Domain"/>
    <property type="match status" value="1"/>
</dbReference>
<dbReference type="HAMAP" id="MF_00394">
    <property type="entry name" value="NAD_Glyc3P_dehydrog"/>
    <property type="match status" value="1"/>
</dbReference>
<dbReference type="InterPro" id="IPR008927">
    <property type="entry name" value="6-PGluconate_DH-like_C_sf"/>
</dbReference>
<dbReference type="InterPro" id="IPR013328">
    <property type="entry name" value="6PGD_dom2"/>
</dbReference>
<dbReference type="InterPro" id="IPR006168">
    <property type="entry name" value="G3P_DH_NAD-dep"/>
</dbReference>
<dbReference type="InterPro" id="IPR006109">
    <property type="entry name" value="G3P_DH_NAD-dep_C"/>
</dbReference>
<dbReference type="InterPro" id="IPR011128">
    <property type="entry name" value="G3P_DH_NAD-dep_N"/>
</dbReference>
<dbReference type="InterPro" id="IPR036291">
    <property type="entry name" value="NAD(P)-bd_dom_sf"/>
</dbReference>
<dbReference type="NCBIfam" id="NF000939">
    <property type="entry name" value="PRK00094.1-1"/>
    <property type="match status" value="1"/>
</dbReference>
<dbReference type="NCBIfam" id="NF000940">
    <property type="entry name" value="PRK00094.1-2"/>
    <property type="match status" value="1"/>
</dbReference>
<dbReference type="NCBIfam" id="NF000942">
    <property type="entry name" value="PRK00094.1-4"/>
    <property type="match status" value="1"/>
</dbReference>
<dbReference type="PANTHER" id="PTHR11728">
    <property type="entry name" value="GLYCEROL-3-PHOSPHATE DEHYDROGENASE"/>
    <property type="match status" value="1"/>
</dbReference>
<dbReference type="PANTHER" id="PTHR11728:SF1">
    <property type="entry name" value="GLYCEROL-3-PHOSPHATE DEHYDROGENASE [NAD(+)] 2, CHLOROPLASTIC"/>
    <property type="match status" value="1"/>
</dbReference>
<dbReference type="Pfam" id="PF07479">
    <property type="entry name" value="NAD_Gly3P_dh_C"/>
    <property type="match status" value="1"/>
</dbReference>
<dbReference type="Pfam" id="PF01210">
    <property type="entry name" value="NAD_Gly3P_dh_N"/>
    <property type="match status" value="1"/>
</dbReference>
<dbReference type="PIRSF" id="PIRSF000114">
    <property type="entry name" value="Glycerol-3-P_dh"/>
    <property type="match status" value="1"/>
</dbReference>
<dbReference type="PRINTS" id="PR00077">
    <property type="entry name" value="GPDHDRGNASE"/>
</dbReference>
<dbReference type="SUPFAM" id="SSF48179">
    <property type="entry name" value="6-phosphogluconate dehydrogenase C-terminal domain-like"/>
    <property type="match status" value="1"/>
</dbReference>
<dbReference type="SUPFAM" id="SSF51735">
    <property type="entry name" value="NAD(P)-binding Rossmann-fold domains"/>
    <property type="match status" value="1"/>
</dbReference>
<dbReference type="PROSITE" id="PS00957">
    <property type="entry name" value="NAD_G3PDH"/>
    <property type="match status" value="1"/>
</dbReference>
<gene>
    <name evidence="1" type="primary">gpsA</name>
    <name type="ordered locus">CKO_05065</name>
</gene>
<organism>
    <name type="scientific">Citrobacter koseri (strain ATCC BAA-895 / CDC 4225-83 / SGSC4696)</name>
    <dbReference type="NCBI Taxonomy" id="290338"/>
    <lineage>
        <taxon>Bacteria</taxon>
        <taxon>Pseudomonadati</taxon>
        <taxon>Pseudomonadota</taxon>
        <taxon>Gammaproteobacteria</taxon>
        <taxon>Enterobacterales</taxon>
        <taxon>Enterobacteriaceae</taxon>
        <taxon>Citrobacter</taxon>
    </lineage>
</organism>
<comment type="function">
    <text evidence="1">Catalyzes the reduction of the glycolytic intermediate dihydroxyacetone phosphate (DHAP) to sn-glycerol 3-phosphate (G3P), the key precursor for phospholipid synthesis.</text>
</comment>
<comment type="catalytic activity">
    <reaction evidence="1">
        <text>sn-glycerol 3-phosphate + NAD(+) = dihydroxyacetone phosphate + NADH + H(+)</text>
        <dbReference type="Rhea" id="RHEA:11092"/>
        <dbReference type="ChEBI" id="CHEBI:15378"/>
        <dbReference type="ChEBI" id="CHEBI:57540"/>
        <dbReference type="ChEBI" id="CHEBI:57597"/>
        <dbReference type="ChEBI" id="CHEBI:57642"/>
        <dbReference type="ChEBI" id="CHEBI:57945"/>
        <dbReference type="EC" id="1.1.1.94"/>
    </reaction>
    <physiologicalReaction direction="right-to-left" evidence="1">
        <dbReference type="Rhea" id="RHEA:11094"/>
    </physiologicalReaction>
</comment>
<comment type="catalytic activity">
    <reaction evidence="1">
        <text>sn-glycerol 3-phosphate + NADP(+) = dihydroxyacetone phosphate + NADPH + H(+)</text>
        <dbReference type="Rhea" id="RHEA:11096"/>
        <dbReference type="ChEBI" id="CHEBI:15378"/>
        <dbReference type="ChEBI" id="CHEBI:57597"/>
        <dbReference type="ChEBI" id="CHEBI:57642"/>
        <dbReference type="ChEBI" id="CHEBI:57783"/>
        <dbReference type="ChEBI" id="CHEBI:58349"/>
        <dbReference type="EC" id="1.1.1.94"/>
    </reaction>
    <physiologicalReaction direction="right-to-left" evidence="1">
        <dbReference type="Rhea" id="RHEA:11098"/>
    </physiologicalReaction>
</comment>
<comment type="pathway">
    <text evidence="1">Membrane lipid metabolism; glycerophospholipid metabolism.</text>
</comment>
<comment type="subcellular location">
    <subcellularLocation>
        <location evidence="1">Cytoplasm</location>
    </subcellularLocation>
</comment>
<comment type="similarity">
    <text evidence="1">Belongs to the NAD-dependent glycerol-3-phosphate dehydrogenase family.</text>
</comment>
<protein>
    <recommendedName>
        <fullName evidence="1">Glycerol-3-phosphate dehydrogenase [NAD(P)+]</fullName>
        <ecNumber evidence="1">1.1.1.94</ecNumber>
    </recommendedName>
    <alternativeName>
        <fullName evidence="1">NAD(P)(+)-dependent glycerol-3-phosphate dehydrogenase</fullName>
    </alternativeName>
    <alternativeName>
        <fullName evidence="1">NAD(P)H-dependent dihydroxyacetone-phosphate reductase</fullName>
    </alternativeName>
</protein>
<proteinExistence type="inferred from homology"/>
<sequence length="339" mass="36428">MNQSNASMTVIGAGSYGTALAITLARNGHQVVLWGHDPKHVATLERDRCNVAFLPDVPFPDTLRLESDLATALAASRNILVVVPSHVFGEVLRQIKPLMRPDARLVWATKGLEAETGRLLQDVAREALGDDIPLAVISGPTFAKELAAGLPTAISLASTDETFADDLQELLHCGKSFRVYSNPDFIGVQLGGAVKNVIAIGAGMSDGIGFGANARTALITRGLTEMSRLGAALGADPTTFMGMAGLGDLVLTCTDNQSRNRRFGMMLGQGMDVQSAQDKIGQVVEGYRNTKEVRELAHRFGVEMPITEEIYQVLYCGKNAREAALTLLGRARKDERSRH</sequence>
<evidence type="ECO:0000255" key="1">
    <source>
        <dbReference type="HAMAP-Rule" id="MF_00394"/>
    </source>
</evidence>
<keyword id="KW-0963">Cytoplasm</keyword>
<keyword id="KW-0444">Lipid biosynthesis</keyword>
<keyword id="KW-0443">Lipid metabolism</keyword>
<keyword id="KW-0520">NAD</keyword>
<keyword id="KW-0521">NADP</keyword>
<keyword id="KW-0547">Nucleotide-binding</keyword>
<keyword id="KW-0560">Oxidoreductase</keyword>
<keyword id="KW-0594">Phospholipid biosynthesis</keyword>
<keyword id="KW-1208">Phospholipid metabolism</keyword>
<keyword id="KW-1185">Reference proteome</keyword>
<name>GPDA_CITK8</name>